<keyword id="KW-0975">Bacterial flagellum</keyword>
<keyword id="KW-1003">Cell membrane</keyword>
<keyword id="KW-0145">Chemotaxis</keyword>
<keyword id="KW-0283">Flagellar rotation</keyword>
<keyword id="KW-0472">Membrane</keyword>
<keyword id="KW-1185">Reference proteome</keyword>
<comment type="function">
    <text>One of the proteins that forms a switch complex that is proposed to be located at the base of the basal body. This complex interacts with chemotaxis proteins (such as CheY) in addition to contacting components of the motor that determine the direction of flagellar rotation.</text>
</comment>
<comment type="subcellular location">
    <subcellularLocation>
        <location>Cell membrane</location>
        <topology>Peripheral membrane protein</topology>
    </subcellularLocation>
    <subcellularLocation>
        <location>Bacterial flagellum basal body</location>
    </subcellularLocation>
</comment>
<comment type="similarity">
    <text evidence="1">Belongs to the FliM family.</text>
</comment>
<comment type="sequence caution" evidence="1">
    <conflict type="erroneous initiation">
        <sequence resource="EMBL-CDS" id="CAA39530"/>
    </conflict>
    <text>Extended N-terminus.</text>
</comment>
<evidence type="ECO:0000305" key="1"/>
<reference key="1">
    <citation type="journal article" date="1991" name="J. Bacteriol.">
        <title>Nucleotide sequence and characterization of a Bacillus subtilis gene encoding a flagellar switch protein.</title>
        <authorList>
            <person name="Zuberi A.R."/>
            <person name="Bischoff D.S."/>
            <person name="Ordal G.W."/>
        </authorList>
    </citation>
    <scope>NUCLEOTIDE SEQUENCE [GENOMIC DNA]</scope>
</reference>
<reference key="2">
    <citation type="journal article" date="1997" name="Nature">
        <title>The complete genome sequence of the Gram-positive bacterium Bacillus subtilis.</title>
        <authorList>
            <person name="Kunst F."/>
            <person name="Ogasawara N."/>
            <person name="Moszer I."/>
            <person name="Albertini A.M."/>
            <person name="Alloni G."/>
            <person name="Azevedo V."/>
            <person name="Bertero M.G."/>
            <person name="Bessieres P."/>
            <person name="Bolotin A."/>
            <person name="Borchert S."/>
            <person name="Borriss R."/>
            <person name="Boursier L."/>
            <person name="Brans A."/>
            <person name="Braun M."/>
            <person name="Brignell S.C."/>
            <person name="Bron S."/>
            <person name="Brouillet S."/>
            <person name="Bruschi C.V."/>
            <person name="Caldwell B."/>
            <person name="Capuano V."/>
            <person name="Carter N.M."/>
            <person name="Choi S.-K."/>
            <person name="Codani J.-J."/>
            <person name="Connerton I.F."/>
            <person name="Cummings N.J."/>
            <person name="Daniel R.A."/>
            <person name="Denizot F."/>
            <person name="Devine K.M."/>
            <person name="Duesterhoeft A."/>
            <person name="Ehrlich S.D."/>
            <person name="Emmerson P.T."/>
            <person name="Entian K.-D."/>
            <person name="Errington J."/>
            <person name="Fabret C."/>
            <person name="Ferrari E."/>
            <person name="Foulger D."/>
            <person name="Fritz C."/>
            <person name="Fujita M."/>
            <person name="Fujita Y."/>
            <person name="Fuma S."/>
            <person name="Galizzi A."/>
            <person name="Galleron N."/>
            <person name="Ghim S.-Y."/>
            <person name="Glaser P."/>
            <person name="Goffeau A."/>
            <person name="Golightly E.J."/>
            <person name="Grandi G."/>
            <person name="Guiseppi G."/>
            <person name="Guy B.J."/>
            <person name="Haga K."/>
            <person name="Haiech J."/>
            <person name="Harwood C.R."/>
            <person name="Henaut A."/>
            <person name="Hilbert H."/>
            <person name="Holsappel S."/>
            <person name="Hosono S."/>
            <person name="Hullo M.-F."/>
            <person name="Itaya M."/>
            <person name="Jones L.-M."/>
            <person name="Joris B."/>
            <person name="Karamata D."/>
            <person name="Kasahara Y."/>
            <person name="Klaerr-Blanchard M."/>
            <person name="Klein C."/>
            <person name="Kobayashi Y."/>
            <person name="Koetter P."/>
            <person name="Koningstein G."/>
            <person name="Krogh S."/>
            <person name="Kumano M."/>
            <person name="Kurita K."/>
            <person name="Lapidus A."/>
            <person name="Lardinois S."/>
            <person name="Lauber J."/>
            <person name="Lazarevic V."/>
            <person name="Lee S.-M."/>
            <person name="Levine A."/>
            <person name="Liu H."/>
            <person name="Masuda S."/>
            <person name="Mauel C."/>
            <person name="Medigue C."/>
            <person name="Medina N."/>
            <person name="Mellado R.P."/>
            <person name="Mizuno M."/>
            <person name="Moestl D."/>
            <person name="Nakai S."/>
            <person name="Noback M."/>
            <person name="Noone D."/>
            <person name="O'Reilly M."/>
            <person name="Ogawa K."/>
            <person name="Ogiwara A."/>
            <person name="Oudega B."/>
            <person name="Park S.-H."/>
            <person name="Parro V."/>
            <person name="Pohl T.M."/>
            <person name="Portetelle D."/>
            <person name="Porwollik S."/>
            <person name="Prescott A.M."/>
            <person name="Presecan E."/>
            <person name="Pujic P."/>
            <person name="Purnelle B."/>
            <person name="Rapoport G."/>
            <person name="Rey M."/>
            <person name="Reynolds S."/>
            <person name="Rieger M."/>
            <person name="Rivolta C."/>
            <person name="Rocha E."/>
            <person name="Roche B."/>
            <person name="Rose M."/>
            <person name="Sadaie Y."/>
            <person name="Sato T."/>
            <person name="Scanlan E."/>
            <person name="Schleich S."/>
            <person name="Schroeter R."/>
            <person name="Scoffone F."/>
            <person name="Sekiguchi J."/>
            <person name="Sekowska A."/>
            <person name="Seror S.J."/>
            <person name="Serror P."/>
            <person name="Shin B.-S."/>
            <person name="Soldo B."/>
            <person name="Sorokin A."/>
            <person name="Tacconi E."/>
            <person name="Takagi T."/>
            <person name="Takahashi H."/>
            <person name="Takemaru K."/>
            <person name="Takeuchi M."/>
            <person name="Tamakoshi A."/>
            <person name="Tanaka T."/>
            <person name="Terpstra P."/>
            <person name="Tognoni A."/>
            <person name="Tosato V."/>
            <person name="Uchiyama S."/>
            <person name="Vandenbol M."/>
            <person name="Vannier F."/>
            <person name="Vassarotti A."/>
            <person name="Viari A."/>
            <person name="Wambutt R."/>
            <person name="Wedler E."/>
            <person name="Wedler H."/>
            <person name="Weitzenegger T."/>
            <person name="Winters P."/>
            <person name="Wipat A."/>
            <person name="Yamamoto H."/>
            <person name="Yamane K."/>
            <person name="Yasumoto K."/>
            <person name="Yata K."/>
            <person name="Yoshida K."/>
            <person name="Yoshikawa H.-F."/>
            <person name="Zumstein E."/>
            <person name="Yoshikawa H."/>
            <person name="Danchin A."/>
        </authorList>
    </citation>
    <scope>NUCLEOTIDE SEQUENCE [LARGE SCALE GENOMIC DNA]</scope>
    <source>
        <strain>168</strain>
    </source>
</reference>
<reference key="3">
    <citation type="journal article" date="1991" name="J. Bacteriol.">
        <title>The flaA locus of Bacillus subtilis is part of a large operon coding for flagellar structures, motility functions, and an ATPase-like polypeptide.</title>
        <authorList>
            <person name="Albertini A.M."/>
            <person name="Caramori T."/>
            <person name="Crabb W.D."/>
            <person name="Scoffone F."/>
            <person name="Galizzi A."/>
        </authorList>
    </citation>
    <scope>NUCLEOTIDE SEQUENCE [GENOMIC DNA] OF 1-59</scope>
    <source>
        <strain>168</strain>
    </source>
</reference>
<reference key="4">
    <citation type="journal article" date="1992" name="Mol. Microbiol.">
        <title>Identification and characterization of FliY, a novel component of the Bacillus subtilis flagellar switch complex.</title>
        <authorList>
            <person name="Bischoff D.S."/>
            <person name="Ordal G.W."/>
        </authorList>
    </citation>
    <scope>NUCLEOTIDE SEQUENCE [GENOMIC DNA] OF 309-332</scope>
</reference>
<reference key="5">
    <citation type="journal article" date="2003" name="J. Biol. Chem.">
        <title>Bacillus subtilis hydrolyzes CheY-P at the location of its action, the flagellar switch.</title>
        <authorList>
            <person name="Szurmant H."/>
            <person name="Bunn M.W."/>
            <person name="Cannistraro V.J."/>
            <person name="Ordal G.W."/>
        </authorList>
    </citation>
    <scope>INTERACTION WITH CHEY</scope>
    <source>
        <strain>168 / OI1085</strain>
    </source>
</reference>
<organism>
    <name type="scientific">Bacillus subtilis (strain 168)</name>
    <dbReference type="NCBI Taxonomy" id="224308"/>
    <lineage>
        <taxon>Bacteria</taxon>
        <taxon>Bacillati</taxon>
        <taxon>Bacillota</taxon>
        <taxon>Bacilli</taxon>
        <taxon>Bacillales</taxon>
        <taxon>Bacillaceae</taxon>
        <taxon>Bacillus</taxon>
    </lineage>
</organism>
<proteinExistence type="evidence at protein level"/>
<protein>
    <recommendedName>
        <fullName>Flagellar motor switch protein FliM</fullName>
    </recommendedName>
</protein>
<dbReference type="EMBL" id="M37691">
    <property type="protein sequence ID" value="AAA22446.1"/>
    <property type="molecule type" value="Genomic_DNA"/>
</dbReference>
<dbReference type="EMBL" id="AL009126">
    <property type="protein sequence ID" value="CAB13504.1"/>
    <property type="molecule type" value="Genomic_DNA"/>
</dbReference>
<dbReference type="EMBL" id="X56049">
    <property type="protein sequence ID" value="CAA39530.1"/>
    <property type="status" value="ALT_INIT"/>
    <property type="molecule type" value="Genomic_DNA"/>
</dbReference>
<dbReference type="EMBL" id="M86738">
    <property type="protein sequence ID" value="AAA22448.1"/>
    <property type="molecule type" value="Genomic_DNA"/>
</dbReference>
<dbReference type="PIR" id="B39136">
    <property type="entry name" value="B39136"/>
</dbReference>
<dbReference type="RefSeq" id="NP_389513.1">
    <property type="nucleotide sequence ID" value="NC_000964.3"/>
</dbReference>
<dbReference type="RefSeq" id="WP_003220879.1">
    <property type="nucleotide sequence ID" value="NZ_OZ025638.1"/>
</dbReference>
<dbReference type="SMR" id="P23453"/>
<dbReference type="FunCoup" id="P23453">
    <property type="interactions" value="128"/>
</dbReference>
<dbReference type="STRING" id="224308.BSU16310"/>
<dbReference type="PaxDb" id="224308-BSU16310"/>
<dbReference type="EnsemblBacteria" id="CAB13504">
    <property type="protein sequence ID" value="CAB13504"/>
    <property type="gene ID" value="BSU_16310"/>
</dbReference>
<dbReference type="GeneID" id="86873859"/>
<dbReference type="GeneID" id="939518"/>
<dbReference type="KEGG" id="bsu:BSU16310"/>
<dbReference type="PATRIC" id="fig|224308.179.peg.1772"/>
<dbReference type="eggNOG" id="COG1868">
    <property type="taxonomic scope" value="Bacteria"/>
</dbReference>
<dbReference type="InParanoid" id="P23453"/>
<dbReference type="OrthoDB" id="9806941at2"/>
<dbReference type="PhylomeDB" id="P23453"/>
<dbReference type="BioCyc" id="BSUB:BSU16310-MONOMER"/>
<dbReference type="PRO" id="PR:P23453"/>
<dbReference type="Proteomes" id="UP000001570">
    <property type="component" value="Chromosome"/>
</dbReference>
<dbReference type="GO" id="GO:0009425">
    <property type="term" value="C:bacterial-type flagellum basal body"/>
    <property type="evidence" value="ECO:0007669"/>
    <property type="project" value="UniProtKB-SubCell"/>
</dbReference>
<dbReference type="GO" id="GO:0005886">
    <property type="term" value="C:plasma membrane"/>
    <property type="evidence" value="ECO:0007669"/>
    <property type="project" value="UniProtKB-SubCell"/>
</dbReference>
<dbReference type="GO" id="GO:0003774">
    <property type="term" value="F:cytoskeletal motor activity"/>
    <property type="evidence" value="ECO:0007669"/>
    <property type="project" value="InterPro"/>
</dbReference>
<dbReference type="GO" id="GO:0044780">
    <property type="term" value="P:bacterial-type flagellum assembly"/>
    <property type="evidence" value="ECO:0000315"/>
    <property type="project" value="CACAO"/>
</dbReference>
<dbReference type="GO" id="GO:0071978">
    <property type="term" value="P:bacterial-type flagellum-dependent swarming motility"/>
    <property type="evidence" value="ECO:0000315"/>
    <property type="project" value="CACAO"/>
</dbReference>
<dbReference type="GO" id="GO:0050918">
    <property type="term" value="P:positive chemotaxis"/>
    <property type="evidence" value="ECO:0000315"/>
    <property type="project" value="CACAO"/>
</dbReference>
<dbReference type="CDD" id="cd17908">
    <property type="entry name" value="FliM"/>
    <property type="match status" value="1"/>
</dbReference>
<dbReference type="Gene3D" id="3.40.1550.10">
    <property type="entry name" value="CheC-like"/>
    <property type="match status" value="1"/>
</dbReference>
<dbReference type="Gene3D" id="2.30.330.10">
    <property type="entry name" value="SpoA-like"/>
    <property type="match status" value="1"/>
</dbReference>
<dbReference type="InterPro" id="IPR028976">
    <property type="entry name" value="CheC-like_sf"/>
</dbReference>
<dbReference type="InterPro" id="IPR001689">
    <property type="entry name" value="Flag_FliM"/>
</dbReference>
<dbReference type="InterPro" id="IPR001543">
    <property type="entry name" value="FliN-like_C"/>
</dbReference>
<dbReference type="InterPro" id="IPR036429">
    <property type="entry name" value="SpoA-like_sf"/>
</dbReference>
<dbReference type="NCBIfam" id="TIGR01397">
    <property type="entry name" value="fliM_switch"/>
    <property type="match status" value="1"/>
</dbReference>
<dbReference type="PANTHER" id="PTHR30034">
    <property type="entry name" value="FLAGELLAR MOTOR SWITCH PROTEIN FLIM"/>
    <property type="match status" value="1"/>
</dbReference>
<dbReference type="PANTHER" id="PTHR30034:SF6">
    <property type="entry name" value="YOP PROTEINS TRANSLOCATION PROTEIN Q"/>
    <property type="match status" value="1"/>
</dbReference>
<dbReference type="Pfam" id="PF02154">
    <property type="entry name" value="FliM"/>
    <property type="match status" value="1"/>
</dbReference>
<dbReference type="Pfam" id="PF01052">
    <property type="entry name" value="FliMN_C"/>
    <property type="match status" value="1"/>
</dbReference>
<dbReference type="PIRSF" id="PIRSF002888">
    <property type="entry name" value="FliM"/>
    <property type="match status" value="1"/>
</dbReference>
<dbReference type="PRINTS" id="PR00955">
    <property type="entry name" value="FLGMOTORFLIM"/>
</dbReference>
<dbReference type="SUPFAM" id="SSF103039">
    <property type="entry name" value="CheC-like"/>
    <property type="match status" value="1"/>
</dbReference>
<dbReference type="SUPFAM" id="SSF101801">
    <property type="entry name" value="Surface presentation of antigens (SPOA)"/>
    <property type="match status" value="1"/>
</dbReference>
<name>FLIM_BACSU</name>
<gene>
    <name type="primary">fliM</name>
    <name type="ordered locus">BSU16310</name>
</gene>
<feature type="chain" id="PRO_0000180922" description="Flagellar motor switch protein FliM">
    <location>
        <begin position="1"/>
        <end position="332"/>
    </location>
</feature>
<sequence>MSGEVLSQNEIDALLSAISTGEMDAEELKKEEKEKKVKVYDFKRALRFSKDQIRSLTRIHDNFARLLTTHFSAQLRTYIHISVSSVDQVPYEEFIRSIPNMTILNLFDVHPMEGRIMMEVNPTIAYTMMDRVMGGIGISHNKVDSLTEIETKIISNLFENALGNYKEAWQSIADIEPEMTEFEVNPQFVQMVSPNETVVVISLNTQIGEISGVINLCIPHIVLEPLIPKLSVHYWMQSDRNEPKPEETKSLEKRIMTAQIPVVAELGTSELTIEEFLSLEVGDCITLDKSVTDPLTVLVGDKPKFLGQAGRVNRKQAVQILDHDIRGEQDGE</sequence>
<accession>P23453</accession>
<accession>Q57518</accession>